<accession>P02293</accession>
<accession>D6VSK6</accession>
<reference key="1">
    <citation type="journal article" date="1980" name="Cell">
        <title>Histone H2B genes of yeast encode two different proteins.</title>
        <authorList>
            <person name="Wallis J.W."/>
            <person name="Hereford L."/>
            <person name="Grunstein M."/>
        </authorList>
    </citation>
    <scope>NUCLEOTIDE SEQUENCE [GENOMIC DNA]</scope>
</reference>
<reference key="2">
    <citation type="journal article" date="1995" name="Nucleic Acids Res.">
        <title>Insertion site specificity of the transposon Tn3.</title>
        <authorList>
            <person name="Davies C.J."/>
            <person name="Hutchison C.A. III"/>
        </authorList>
    </citation>
    <scope>NUCLEOTIDE SEQUENCE [GENOMIC DNA]</scope>
</reference>
<reference key="3">
    <citation type="journal article" date="1997" name="Nature">
        <title>The nucleotide sequence of Saccharomyces cerevisiae chromosome IV.</title>
        <authorList>
            <person name="Jacq C."/>
            <person name="Alt-Moerbe J."/>
            <person name="Andre B."/>
            <person name="Arnold W."/>
            <person name="Bahr A."/>
            <person name="Ballesta J.P.G."/>
            <person name="Bargues M."/>
            <person name="Baron L."/>
            <person name="Becker A."/>
            <person name="Biteau N."/>
            <person name="Bloecker H."/>
            <person name="Blugeon C."/>
            <person name="Boskovic J."/>
            <person name="Brandt P."/>
            <person name="Brueckner M."/>
            <person name="Buitrago M.J."/>
            <person name="Coster F."/>
            <person name="Delaveau T."/>
            <person name="del Rey F."/>
            <person name="Dujon B."/>
            <person name="Eide L.G."/>
            <person name="Garcia-Cantalejo J.M."/>
            <person name="Goffeau A."/>
            <person name="Gomez-Peris A."/>
            <person name="Granotier C."/>
            <person name="Hanemann V."/>
            <person name="Hankeln T."/>
            <person name="Hoheisel J.D."/>
            <person name="Jaeger W."/>
            <person name="Jimenez A."/>
            <person name="Jonniaux J.-L."/>
            <person name="Kraemer C."/>
            <person name="Kuester H."/>
            <person name="Laamanen P."/>
            <person name="Legros Y."/>
            <person name="Louis E.J."/>
            <person name="Moeller-Rieker S."/>
            <person name="Monnet A."/>
            <person name="Moro M."/>
            <person name="Mueller-Auer S."/>
            <person name="Nussbaumer B."/>
            <person name="Paricio N."/>
            <person name="Paulin L."/>
            <person name="Perea J."/>
            <person name="Perez-Alonso M."/>
            <person name="Perez-Ortin J.E."/>
            <person name="Pohl T.M."/>
            <person name="Prydz H."/>
            <person name="Purnelle B."/>
            <person name="Rasmussen S.W."/>
            <person name="Remacha M.A."/>
            <person name="Revuelta J.L."/>
            <person name="Rieger M."/>
            <person name="Salom D."/>
            <person name="Saluz H.P."/>
            <person name="Saiz J.E."/>
            <person name="Saren A.-M."/>
            <person name="Schaefer M."/>
            <person name="Scharfe M."/>
            <person name="Schmidt E.R."/>
            <person name="Schneider C."/>
            <person name="Scholler P."/>
            <person name="Schwarz S."/>
            <person name="Soler-Mira A."/>
            <person name="Urrestarazu L.A."/>
            <person name="Verhasselt P."/>
            <person name="Vissers S."/>
            <person name="Voet M."/>
            <person name="Volckaert G."/>
            <person name="Wagner G."/>
            <person name="Wambutt R."/>
            <person name="Wedler E."/>
            <person name="Wedler H."/>
            <person name="Woelfl S."/>
            <person name="Harris D.E."/>
            <person name="Bowman S."/>
            <person name="Brown D."/>
            <person name="Churcher C.M."/>
            <person name="Connor R."/>
            <person name="Dedman K."/>
            <person name="Gentles S."/>
            <person name="Hamlin N."/>
            <person name="Hunt S."/>
            <person name="Jones L."/>
            <person name="McDonald S."/>
            <person name="Murphy L.D."/>
            <person name="Niblett D."/>
            <person name="Odell C."/>
            <person name="Oliver K."/>
            <person name="Rajandream M.A."/>
            <person name="Richards C."/>
            <person name="Shore L."/>
            <person name="Walsh S.V."/>
            <person name="Barrell B.G."/>
            <person name="Dietrich F.S."/>
            <person name="Mulligan J.T."/>
            <person name="Allen E."/>
            <person name="Araujo R."/>
            <person name="Aviles E."/>
            <person name="Berno A."/>
            <person name="Carpenter J."/>
            <person name="Chen E."/>
            <person name="Cherry J.M."/>
            <person name="Chung E."/>
            <person name="Duncan M."/>
            <person name="Hunicke-Smith S."/>
            <person name="Hyman R.W."/>
            <person name="Komp C."/>
            <person name="Lashkari D."/>
            <person name="Lew H."/>
            <person name="Lin D."/>
            <person name="Mosedale D."/>
            <person name="Nakahara K."/>
            <person name="Namath A."/>
            <person name="Oefner P."/>
            <person name="Oh C."/>
            <person name="Petel F.X."/>
            <person name="Roberts D."/>
            <person name="Schramm S."/>
            <person name="Schroeder M."/>
            <person name="Shogren T."/>
            <person name="Shroff N."/>
            <person name="Winant A."/>
            <person name="Yelton M.A."/>
            <person name="Botstein D."/>
            <person name="Davis R.W."/>
            <person name="Johnston M."/>
            <person name="Andrews S."/>
            <person name="Brinkman R."/>
            <person name="Cooper J."/>
            <person name="Ding H."/>
            <person name="Du Z."/>
            <person name="Favello A."/>
            <person name="Fulton L."/>
            <person name="Gattung S."/>
            <person name="Greco T."/>
            <person name="Hallsworth K."/>
            <person name="Hawkins J."/>
            <person name="Hillier L.W."/>
            <person name="Jier M."/>
            <person name="Johnson D."/>
            <person name="Johnston L."/>
            <person name="Kirsten J."/>
            <person name="Kucaba T."/>
            <person name="Langston Y."/>
            <person name="Latreille P."/>
            <person name="Le T."/>
            <person name="Mardis E."/>
            <person name="Menezes S."/>
            <person name="Miller N."/>
            <person name="Nhan M."/>
            <person name="Pauley A."/>
            <person name="Peluso D."/>
            <person name="Rifkin L."/>
            <person name="Riles L."/>
            <person name="Taich A."/>
            <person name="Trevaskis E."/>
            <person name="Vignati D."/>
            <person name="Wilcox L."/>
            <person name="Wohldman P."/>
            <person name="Vaudin M."/>
            <person name="Wilson R."/>
            <person name="Waterston R."/>
            <person name="Albermann K."/>
            <person name="Hani J."/>
            <person name="Heumann K."/>
            <person name="Kleine K."/>
            <person name="Mewes H.-W."/>
            <person name="Zollner A."/>
            <person name="Zaccaria P."/>
        </authorList>
    </citation>
    <scope>NUCLEOTIDE SEQUENCE [LARGE SCALE GENOMIC DNA]</scope>
    <source>
        <strain>ATCC 204508 / S288c</strain>
    </source>
</reference>
<reference key="4">
    <citation type="journal article" date="2014" name="G3 (Bethesda)">
        <title>The reference genome sequence of Saccharomyces cerevisiae: Then and now.</title>
        <authorList>
            <person name="Engel S.R."/>
            <person name="Dietrich F.S."/>
            <person name="Fisk D.G."/>
            <person name="Binkley G."/>
            <person name="Balakrishnan R."/>
            <person name="Costanzo M.C."/>
            <person name="Dwight S.S."/>
            <person name="Hitz B.C."/>
            <person name="Karra K."/>
            <person name="Nash R.S."/>
            <person name="Weng S."/>
            <person name="Wong E.D."/>
            <person name="Lloyd P."/>
            <person name="Skrzypek M.S."/>
            <person name="Miyasato S.R."/>
            <person name="Simison M."/>
            <person name="Cherry J.M."/>
        </authorList>
    </citation>
    <scope>GENOME REANNOTATION</scope>
    <source>
        <strain>ATCC 204508 / S288c</strain>
    </source>
</reference>
<reference key="5">
    <citation type="journal article" date="2007" name="Genome Res.">
        <title>Approaching a complete repository of sequence-verified protein-encoding clones for Saccharomyces cerevisiae.</title>
        <authorList>
            <person name="Hu Y."/>
            <person name="Rolfs A."/>
            <person name="Bhullar B."/>
            <person name="Murthy T.V.S."/>
            <person name="Zhu C."/>
            <person name="Berger M.F."/>
            <person name="Camargo A.A."/>
            <person name="Kelley F."/>
            <person name="McCarron S."/>
            <person name="Jepson D."/>
            <person name="Richardson A."/>
            <person name="Raphael J."/>
            <person name="Moreira D."/>
            <person name="Taycher E."/>
            <person name="Zuo D."/>
            <person name="Mohr S."/>
            <person name="Kane M.F."/>
            <person name="Williamson J."/>
            <person name="Simpson A.J.G."/>
            <person name="Bulyk M.L."/>
            <person name="Harlow E."/>
            <person name="Marsischky G."/>
            <person name="Kolodner R.D."/>
            <person name="LaBaer J."/>
        </authorList>
    </citation>
    <scope>NUCLEOTIDE SEQUENCE [GENOMIC DNA]</scope>
    <source>
        <strain>ATCC 204508 / S288c</strain>
    </source>
</reference>
<reference key="6">
    <citation type="journal article" date="1980" name="Eur. J. Biochem.">
        <title>The histones of yeast. The isolation and partial structure of the core histones.</title>
        <authorList>
            <person name="Brandt W.F."/>
            <person name="Patterson K."/>
            <person name="von Holt C."/>
        </authorList>
    </citation>
    <scope>PROTEIN SEQUENCE OF 64-89</scope>
    <scope>PROBABLE CLEAVAGE OF INITIATOR METHIONINE</scope>
</reference>
<reference key="7">
    <citation type="journal article" date="1990" name="Mol. Cell. Biol.">
        <title>Coding and noncoding sequences at the 3' end of yeast histone H2B mRNA confer cell cycle regulation.</title>
        <authorList>
            <person name="Xu H."/>
            <person name="Johnson L."/>
            <person name="Grunstein M."/>
        </authorList>
    </citation>
    <scope>NUCLEOTIDE SEQUENCE [MRNA] OF 115-131</scope>
</reference>
<reference key="8">
    <citation type="journal article" date="2000" name="J. Biol. Chem.">
        <title>Steady-state levels of histone acetylation in Saccharomyces cerevisiae.</title>
        <authorList>
            <person name="Waterborg J.H."/>
        </authorList>
    </citation>
    <scope>ACETYLATION</scope>
</reference>
<reference key="9">
    <citation type="journal article" date="2000" name="Science">
        <title>Rad6-dependent ubiquitination of histone H2B in yeast.</title>
        <authorList>
            <person name="Robzyk K."/>
            <person name="Recht J."/>
            <person name="Osley M.A."/>
        </authorList>
    </citation>
    <scope>UBIQUITINATION AT LYS-124</scope>
    <scope>MUTAGENESIS OF LYS-124</scope>
</reference>
<reference key="10">
    <citation type="journal article" date="2001" name="Mol. Cell">
        <title>Highly specific antibodies determine histone acetylation site usage in yeast heterochromatin and euchromatin.</title>
        <authorList>
            <person name="Suka N."/>
            <person name="Suka Y."/>
            <person name="Carmen A.A."/>
            <person name="Wu J."/>
            <person name="Grunstein M."/>
        </authorList>
    </citation>
    <scope>ACETYLATION AT LYS-12 AND LYS-17</scope>
</reference>
<reference key="11">
    <citation type="journal article" date="2002" name="Genetics">
        <title>A role for histone H2B during repair of UV-induced DNA damage in Saccharomyces cerevisiae.</title>
        <authorList>
            <person name="Martini E.M.D."/>
            <person name="Keeney S."/>
            <person name="Osley M.A."/>
        </authorList>
    </citation>
    <scope>FUNCTION</scope>
    <scope>MUTAGENESIS OF VAL-48; TYR-87 AND ASN-88</scope>
</reference>
<reference key="12">
    <citation type="journal article" date="2002" name="Nature">
        <title>Gene silencing: trans-histone regulatory pathway in chromatin.</title>
        <authorList>
            <person name="Briggs S.D."/>
            <person name="Xiao T."/>
            <person name="Sun Z.-W."/>
            <person name="Caldwell J.A."/>
            <person name="Shabanowitz J."/>
            <person name="Hunt D.F."/>
            <person name="Allis C.D."/>
            <person name="Strahl B.D."/>
        </authorList>
    </citation>
    <scope>FUNCTION</scope>
    <scope>MUTAGENESIS OF LYS-124</scope>
</reference>
<reference key="13">
    <citation type="journal article" date="2003" name="Genes Dev.">
        <title>Transcriptional activation via sequential histone H2B ubiquitylation and deubiquitylation, mediated by SAGA-associated Ubp8.</title>
        <authorList>
            <person name="Henry K.W."/>
            <person name="Wyce A."/>
            <person name="Lo W.-S."/>
            <person name="Duggan L.J."/>
            <person name="Emre N.C.T."/>
            <person name="Kao C.-F."/>
            <person name="Pillus L."/>
            <person name="Shilatifard A."/>
            <person name="Osley M.A."/>
            <person name="Berger S.L."/>
        </authorList>
    </citation>
    <scope>UBIQUITINATION</scope>
    <scope>DEUBIQUITINATION BY UBP8</scope>
</reference>
<reference key="14">
    <citation type="journal article" date="2003" name="Mol. Cell">
        <title>A conserved RING finger protein required for histone H2B monoubiquitination and cell size control.</title>
        <authorList>
            <person name="Hwang W.W."/>
            <person name="Venkatasubrahmanyam S."/>
            <person name="Ianculescu A.G."/>
            <person name="Tong A."/>
            <person name="Boone C."/>
            <person name="Madhani H.D."/>
        </authorList>
    </citation>
    <scope>UBIQUITINATION AT LYS-124</scope>
</reference>
<reference key="15">
    <citation type="journal article" date="2003" name="Mol. Cell">
        <title>Bre1, an E3 ubiquitin ligase required for recruitment and substrate selection of Rad6 at a promoter.</title>
        <authorList>
            <person name="Wood A."/>
            <person name="Krogan N.J."/>
            <person name="Dover J."/>
            <person name="Schneider J."/>
            <person name="Heidt J."/>
            <person name="Boateng M.A."/>
            <person name="Dean K."/>
            <person name="Golshani A."/>
            <person name="Zhang Y."/>
            <person name="Greenblatt J.F."/>
            <person name="Johnston M."/>
            <person name="Shilatifard A."/>
        </authorList>
    </citation>
    <scope>UBIQUITINATION AT LYS-124</scope>
</reference>
<reference key="16">
    <citation type="journal article" date="2004" name="Cell">
        <title>Mapping global histone acetylation patterns to gene expression.</title>
        <authorList>
            <person name="Kurdistani S.K."/>
            <person name="Tavazoie S."/>
            <person name="Grunstein M."/>
        </authorList>
    </citation>
    <scope>ACETYLATION AT LYS-12 AND LYS-17</scope>
</reference>
<reference key="17">
    <citation type="journal article" date="2004" name="Genes Dev.">
        <title>Rad6 plays a role in transcriptional activation through ubiquitylation of histone H2B.</title>
        <authorList>
            <person name="Kao C.-F."/>
            <person name="Hillyer C."/>
            <person name="Tsukuda T."/>
            <person name="Henry K.W."/>
            <person name="Berger S.L."/>
            <person name="Osley M.A."/>
        </authorList>
    </citation>
    <scope>UBIQUITINATION BY UBC2</scope>
    <scope>FUNCTION</scope>
</reference>
<reference key="18">
    <citation type="journal article" date="2004" name="J. Biol. Chem.">
        <title>Carbohydrates induce mono-ubiquitination of H2B in yeast.</title>
        <authorList>
            <person name="Dong L."/>
            <person name="Xu C.W."/>
        </authorList>
    </citation>
    <scope>UBIQUITINATION AT LYS-124</scope>
    <scope>MUTAGENESIS OF LYS-124</scope>
</reference>
<reference key="19">
    <citation type="journal article" date="2004" name="J. Biol. Chem.">
        <title>Global analyses of sumoylated proteins in Saccharomyces cerevisiae. Induction of protein sumoylation by cellular stresses.</title>
        <authorList>
            <person name="Zhou W."/>
            <person name="Ryan J.J."/>
            <person name="Zhou H."/>
        </authorList>
    </citation>
    <scope>SUMOYLATION [LARGE SCALE ANALYSIS]</scope>
    <scope>IDENTIFICATION BY MASS SPECTROMETRY</scope>
</reference>
<reference key="20">
    <citation type="journal article" date="2004" name="Proc. Natl. Acad. Sci. U.S.A.">
        <title>Rad6-Bre1-mediated histone H2B ubiquitylation modulates the formation of double-strand breaks during meiosis.</title>
        <authorList>
            <person name="Yamashita K."/>
            <person name="Shinohara M."/>
            <person name="Shinohara A."/>
        </authorList>
    </citation>
    <scope>FUNCTION</scope>
    <scope>UBIQUITINATION AT LYS-124 BY THE UBC2-BRE1 COMPLEX</scope>
    <scope>MUTAGENESIS OF LYS-124</scope>
</reference>
<reference key="21">
    <citation type="journal article" date="2005" name="Cell">
        <title>Sterile 20 kinase phosphorylates histone H2B at serine 10 during hydrogen peroxide-induced apoptosis in S. cerevisiae.</title>
        <authorList>
            <person name="Ahn S.-H."/>
            <person name="Cheung W.L."/>
            <person name="Hsu J.-Y."/>
            <person name="Diaz R.L."/>
            <person name="Smith M.M."/>
            <person name="Allis C.D."/>
        </authorList>
    </citation>
    <scope>PHOSPHORYLATION AT SER-11</scope>
    <scope>MUTAGENESIS OF SER-11</scope>
    <scope>FUNCTION</scope>
</reference>
<reference key="22">
    <citation type="journal article" date="2005" name="Cell Cycle">
        <title>H2B (Ser10) phosphorylation is induced during apoptosis and meiosis in S. cerevisiae.</title>
        <authorList>
            <person name="Ahn S.-H."/>
            <person name="Henderson K.A."/>
            <person name="Keeney S."/>
            <person name="Allis C.D."/>
        </authorList>
    </citation>
    <scope>PHOSPHORYLATION AT SER-11</scope>
    <scope>FUNCTION</scope>
</reference>
<reference key="23">
    <citation type="journal article" date="2005" name="J. Biol. Chem.">
        <title>The DNA damage checkpoint response requires histone H2B ubiquitination by Rad6-Bre1 and H3 methylation by Dot1.</title>
        <authorList>
            <person name="Giannattasio M."/>
            <person name="Lazzaro F."/>
            <person name="Plevani P."/>
            <person name="Muzi-Falconi M."/>
        </authorList>
    </citation>
    <scope>FUNCTION</scope>
    <scope>MUTAGENESIS OF LYS-124</scope>
</reference>
<reference key="24">
    <citation type="journal article" date="2005" name="Mol. Cell. Biol.">
        <title>Histone H2B ubiquitylation is associated with elongating RNA polymerase II.</title>
        <authorList>
            <person name="Xiao T."/>
            <person name="Kao C.-F."/>
            <person name="Krogan N.J."/>
            <person name="Sun Z.-W."/>
            <person name="Greenblatt J.F."/>
            <person name="Osley M.A."/>
            <person name="Strahl B.D."/>
        </authorList>
    </citation>
    <scope>UBIQUITINATION BY THE UBC2-BRE1 COMPLEX</scope>
    <scope>FUNCTION</scope>
</reference>
<reference key="25">
    <citation type="journal article" date="2005" name="Mol. Cell. Biol.">
        <title>H2B ubiquitin protease Ubp8 and Sgf11 constitute a discrete functional module within the Saccharomyces cerevisiae SAGA complex.</title>
        <authorList>
            <person name="Ingvarsdottir K."/>
            <person name="Krogan N.J."/>
            <person name="Emre N.C.T."/>
            <person name="Wyce A."/>
            <person name="Thompson N.J."/>
            <person name="Emili A."/>
            <person name="Hughes T.R."/>
            <person name="Greenblatt J.F."/>
            <person name="Berger S.L."/>
        </authorList>
    </citation>
    <scope>DEUBIQUITINATION BY THE UBP8-SGF11 COMPLEX</scope>
</reference>
<reference key="26">
    <citation type="journal article" date="2005" name="Mol. Cell. Biol.">
        <title>The deubiquitylation activity of Ubp8 is dependent upon Sgf11 and its association with the SAGA complex.</title>
        <authorList>
            <person name="Lee K.K."/>
            <person name="Florens L."/>
            <person name="Swanson S.K."/>
            <person name="Washburn M.P."/>
            <person name="Workman J.L."/>
        </authorList>
    </citation>
    <scope>DEUBIQUITINATION BY THE UBP8-SGF11 COMPLEX</scope>
</reference>
<reference key="27">
    <citation type="journal article" date="2006" name="Genes Dev.">
        <title>Histone sumoylation is a negative regulator in Saccharomyces cerevisiae and shows dynamic interplay with positive-acting histone modifications.</title>
        <authorList>
            <person name="Nathan D."/>
            <person name="Ingvarsdottir K."/>
            <person name="Sterner D.E."/>
            <person name="Bylebyl G.R."/>
            <person name="Dokmanovic M."/>
            <person name="Dorsey J.A."/>
            <person name="Whelan K.A."/>
            <person name="Krsmanovic M."/>
            <person name="Lane W.S."/>
            <person name="Meluh P.B."/>
            <person name="Johnson E.S."/>
            <person name="Berger S.L."/>
        </authorList>
    </citation>
    <scope>SUMOYLATION AT LYS-7; LYS-8; LYS-17 AND LYS-18</scope>
    <scope>ACETYLATION AT LYS-7; LYS-8 AND LYS-17</scope>
    <scope>MUTAGENESIS OF 7-LYS-LYS-8 AND 17-LYS-LYS-18</scope>
    <scope>FUNCTION</scope>
    <scope>IDENTIFICATION BY MASS SPECTROMETRY</scope>
</reference>
<reference key="28">
    <citation type="journal article" date="2006" name="Mol. Cell. Proteomics">
        <title>A tandem affinity tag for two-step purification under fully denaturing conditions: application in ubiquitin profiling and protein complex identification combined with in vivocross-linking.</title>
        <authorList>
            <person name="Tagwerker C."/>
            <person name="Flick K."/>
            <person name="Cui M."/>
            <person name="Guerrero C."/>
            <person name="Dou Y."/>
            <person name="Auer B."/>
            <person name="Baldi P."/>
            <person name="Huang L."/>
            <person name="Kaiser P."/>
        </authorList>
    </citation>
    <scope>UBIQUITINATION AT LYS-124</scope>
</reference>
<reference key="29">
    <citation type="journal article" date="2009" name="J. Proteome Res.">
        <title>Identification and verification of lysine propionylation and butyrylation in yeast core histones using PTMap software.</title>
        <authorList>
            <person name="Zhang K."/>
            <person name="Chen Y."/>
            <person name="Zhang Z."/>
            <person name="Zhao Y."/>
        </authorList>
    </citation>
    <scope>ACETYLATION AT LYS-17; LYS-18; LYS-22 AND LYS-23</scope>
    <scope>BUTYRYLATION AT LYS-22</scope>
    <scope>METHYLATION AT LYS-23 AND LYS-38</scope>
</reference>
<reference key="30">
    <citation type="journal article" date="2012" name="Mol. Cell. Proteomics">
        <title>Lysine succinylation and lysine malonylation in histones.</title>
        <authorList>
            <person name="Xie Z."/>
            <person name="Dai J."/>
            <person name="Dai L."/>
            <person name="Tan M."/>
            <person name="Cheng Z."/>
            <person name="Wu Y."/>
            <person name="Boeke J.D."/>
            <person name="Zhao Y."/>
        </authorList>
    </citation>
    <scope>SUCCINYLATION AT LYS-35 AND LYS-47</scope>
</reference>
<reference key="31">
    <citation type="journal article" date="2012" name="Proc. Natl. Acad. Sci. U.S.A.">
        <title>N-terminal acetylome analyses and functional insights of the N-terminal acetyltransferase NatB.</title>
        <authorList>
            <person name="Van Damme P."/>
            <person name="Lasa M."/>
            <person name="Polevoda B."/>
            <person name="Gazquez C."/>
            <person name="Elosegui-Artola A."/>
            <person name="Kim D.S."/>
            <person name="De Juan-Pardo E."/>
            <person name="Demeyer K."/>
            <person name="Hole K."/>
            <person name="Larrea E."/>
            <person name="Timmerman E."/>
            <person name="Prieto J."/>
            <person name="Arnesen T."/>
            <person name="Sherman F."/>
            <person name="Gevaert K."/>
            <person name="Aldabe R."/>
        </authorList>
    </citation>
    <scope>IDENTIFICATION BY MASS SPECTROMETRY [LARGE SCALE ANALYSIS]</scope>
</reference>
<reference key="32">
    <citation type="journal article" date="2008" name="Nat. Struct. Mol. Biol.">
        <title>NMR structure of chaperone Chz1 complexed with histones H2A.Z-H2B.</title>
        <authorList>
            <person name="Zhou Z."/>
            <person name="Feng H."/>
            <person name="Hansen D.F."/>
            <person name="Kato H."/>
            <person name="Luk E."/>
            <person name="Freedberg D.I."/>
            <person name="Kay L.E."/>
            <person name="Wu C."/>
            <person name="Bai Y."/>
        </authorList>
    </citation>
    <scope>STRUCTURE BY NMR OF 37-131</scope>
</reference>
<organism>
    <name type="scientific">Saccharomyces cerevisiae (strain ATCC 204508 / S288c)</name>
    <name type="common">Baker's yeast</name>
    <dbReference type="NCBI Taxonomy" id="559292"/>
    <lineage>
        <taxon>Eukaryota</taxon>
        <taxon>Fungi</taxon>
        <taxon>Dikarya</taxon>
        <taxon>Ascomycota</taxon>
        <taxon>Saccharomycotina</taxon>
        <taxon>Saccharomycetes</taxon>
        <taxon>Saccharomycetales</taxon>
        <taxon>Saccharomycetaceae</taxon>
        <taxon>Saccharomyces</taxon>
    </lineage>
</organism>
<gene>
    <name type="primary">HTB1</name>
    <name type="synonym">H2B1</name>
    <name type="synonym">SPT12</name>
    <name type="ordered locus">YDR224C</name>
    <name type="ORF">YD9934.09C</name>
</gene>
<dbReference type="EMBL" id="J01327">
    <property type="protein sequence ID" value="AAA88719.1"/>
    <property type="molecule type" value="Genomic_DNA"/>
</dbReference>
<dbReference type="EMBL" id="U13239">
    <property type="protein sequence ID" value="AAC33141.1"/>
    <property type="molecule type" value="Genomic_DNA"/>
</dbReference>
<dbReference type="EMBL" id="Z48612">
    <property type="protein sequence ID" value="CAA88504.1"/>
    <property type="molecule type" value="Genomic_DNA"/>
</dbReference>
<dbReference type="EMBL" id="AY557724">
    <property type="protein sequence ID" value="AAS56050.1"/>
    <property type="molecule type" value="Genomic_DNA"/>
</dbReference>
<dbReference type="EMBL" id="M37743">
    <property type="protein sequence ID" value="AAA34694.2"/>
    <property type="molecule type" value="mRNA"/>
</dbReference>
<dbReference type="EMBL" id="BK006938">
    <property type="protein sequence ID" value="DAA12066.1"/>
    <property type="molecule type" value="Genomic_DNA"/>
</dbReference>
<dbReference type="PIR" id="A02621">
    <property type="entry name" value="HSBY22"/>
</dbReference>
<dbReference type="RefSeq" id="NP_010510.3">
    <property type="nucleotide sequence ID" value="NM_001180532.3"/>
</dbReference>
<dbReference type="PDB" id="2JSS">
    <property type="method" value="NMR"/>
    <property type="chains" value="A=37-131"/>
</dbReference>
<dbReference type="PDB" id="4KUD">
    <property type="method" value="X-ray"/>
    <property type="resolution" value="3.20 A"/>
    <property type="chains" value="D/H=1-131"/>
</dbReference>
<dbReference type="PDB" id="4M6B">
    <property type="method" value="X-ray"/>
    <property type="resolution" value="1.78 A"/>
    <property type="chains" value="A/D=37-131"/>
</dbReference>
<dbReference type="PDB" id="4WNN">
    <property type="method" value="X-ray"/>
    <property type="resolution" value="1.80 A"/>
    <property type="chains" value="B/D/F/H=31-131"/>
</dbReference>
<dbReference type="PDB" id="5BT1">
    <property type="method" value="X-ray"/>
    <property type="resolution" value="2.62 A"/>
    <property type="chains" value="D=1-131"/>
</dbReference>
<dbReference type="PDB" id="6AE8">
    <property type="method" value="X-ray"/>
    <property type="resolution" value="1.65 A"/>
    <property type="chains" value="A/B=37-131"/>
</dbReference>
<dbReference type="PDB" id="6GEJ">
    <property type="method" value="EM"/>
    <property type="resolution" value="3.60 A"/>
    <property type="chains" value="G/H=1-131"/>
</dbReference>
<dbReference type="PDB" id="6GEN">
    <property type="method" value="EM"/>
    <property type="resolution" value="3.60 A"/>
    <property type="chains" value="G/H=1-131"/>
</dbReference>
<dbReference type="PDB" id="6QLD">
    <property type="method" value="EM"/>
    <property type="resolution" value="4.15 A"/>
    <property type="chains" value="h=36-129"/>
</dbReference>
<dbReference type="PDB" id="7DLX">
    <property type="method" value="X-ray"/>
    <property type="resolution" value="2.40 A"/>
    <property type="chains" value="A/B/C/D/E/F/G/H=37-131"/>
</dbReference>
<dbReference type="PDB" id="7K78">
    <property type="method" value="EM"/>
    <property type="resolution" value="3.10 A"/>
    <property type="chains" value="D/H=1-131"/>
</dbReference>
<dbReference type="PDB" id="7K7G">
    <property type="method" value="EM"/>
    <property type="resolution" value="4.20 A"/>
    <property type="chains" value="D/H=1-131"/>
</dbReference>
<dbReference type="PDB" id="7ON1">
    <property type="method" value="EM"/>
    <property type="resolution" value="3.35 A"/>
    <property type="chains" value="d/h=1-131"/>
</dbReference>
<dbReference type="PDB" id="7SSA">
    <property type="method" value="EM"/>
    <property type="resolution" value="3.20 A"/>
    <property type="chains" value="D/H=2-131"/>
</dbReference>
<dbReference type="PDB" id="8OW0">
    <property type="method" value="EM"/>
    <property type="resolution" value="3.40 A"/>
    <property type="chains" value="d/h=1-131"/>
</dbReference>
<dbReference type="PDB" id="8OW1">
    <property type="method" value="EM"/>
    <property type="resolution" value="3.70 A"/>
    <property type="chains" value="d/h=1-131"/>
</dbReference>
<dbReference type="PDB" id="8QKU">
    <property type="method" value="EM"/>
    <property type="resolution" value="3.80 A"/>
    <property type="chains" value="G/H=1-131"/>
</dbReference>
<dbReference type="PDB" id="8QKV">
    <property type="method" value="EM"/>
    <property type="resolution" value="4.70 A"/>
    <property type="chains" value="G/H=1-131"/>
</dbReference>
<dbReference type="PDB" id="8QYV">
    <property type="method" value="EM"/>
    <property type="resolution" value="3.50 A"/>
    <property type="chains" value="G=1-131"/>
</dbReference>
<dbReference type="PDB" id="8QZ0">
    <property type="method" value="EM"/>
    <property type="resolution" value="3.80 A"/>
    <property type="chains" value="G/H=1-131"/>
</dbReference>
<dbReference type="PDB" id="9B1E">
    <property type="method" value="EM"/>
    <property type="resolution" value="4.40 A"/>
    <property type="chains" value="R/T=1-131"/>
</dbReference>
<dbReference type="PDB" id="9FBW">
    <property type="method" value="EM"/>
    <property type="resolution" value="4.40 A"/>
    <property type="chains" value="G=1-131"/>
</dbReference>
<dbReference type="PDBsum" id="2JSS"/>
<dbReference type="PDBsum" id="4KUD"/>
<dbReference type="PDBsum" id="4M6B"/>
<dbReference type="PDBsum" id="4WNN"/>
<dbReference type="PDBsum" id="5BT1"/>
<dbReference type="PDBsum" id="6AE8"/>
<dbReference type="PDBsum" id="6GEJ"/>
<dbReference type="PDBsum" id="6GEN"/>
<dbReference type="PDBsum" id="6QLD"/>
<dbReference type="PDBsum" id="7DLX"/>
<dbReference type="PDBsum" id="7K78"/>
<dbReference type="PDBsum" id="7K7G"/>
<dbReference type="PDBsum" id="7ON1"/>
<dbReference type="PDBsum" id="7SSA"/>
<dbReference type="PDBsum" id="8OW0"/>
<dbReference type="PDBsum" id="8OW1"/>
<dbReference type="PDBsum" id="8QKU"/>
<dbReference type="PDBsum" id="8QKV"/>
<dbReference type="PDBsum" id="8QYV"/>
<dbReference type="PDBsum" id="8QZ0"/>
<dbReference type="PDBsum" id="9B1E"/>
<dbReference type="PDBsum" id="9FBW"/>
<dbReference type="EMDB" id="EMD-17226"/>
<dbReference type="EMDB" id="EMD-17227"/>
<dbReference type="EMDB" id="EMD-18471"/>
<dbReference type="EMDB" id="EMD-18472"/>
<dbReference type="EMDB" id="EMD-18764"/>
<dbReference type="EMDB" id="EMD-18769"/>
<dbReference type="EMDB" id="EMD-22696"/>
<dbReference type="EMDB" id="EMD-22698"/>
<dbReference type="EMDB" id="EMD-25406"/>
<dbReference type="EMDB" id="EMD-41839"/>
<dbReference type="EMDB" id="EMD-41851"/>
<dbReference type="EMDB" id="EMD-41852"/>
<dbReference type="EMDB" id="EMD-41853"/>
<dbReference type="EMDB" id="EMD-4395"/>
<dbReference type="EMDB" id="EMD-4396"/>
<dbReference type="EMDB" id="EMD-4579"/>
<dbReference type="EMDB" id="EMD-50297"/>
<dbReference type="SMR" id="P02293"/>
<dbReference type="BioGRID" id="32276">
    <property type="interactions" value="521"/>
</dbReference>
<dbReference type="ComplexPortal" id="CPX-1611">
    <property type="entry name" value="Nucleosome, variant HTA2-HTB1"/>
</dbReference>
<dbReference type="ComplexPortal" id="CPX-1612">
    <property type="entry name" value="Nucleosome, variant HTA1-HTB1"/>
</dbReference>
<dbReference type="ComplexPortal" id="CPX-1613">
    <property type="entry name" value="Nucleosome, variant HTZ1-HTB1"/>
</dbReference>
<dbReference type="DIP" id="DIP-416N"/>
<dbReference type="ELM" id="P02293"/>
<dbReference type="FunCoup" id="P02293">
    <property type="interactions" value="1190"/>
</dbReference>
<dbReference type="IntAct" id="P02293">
    <property type="interactions" value="287"/>
</dbReference>
<dbReference type="MINT" id="P02293"/>
<dbReference type="STRING" id="4932.YDR224C"/>
<dbReference type="iPTMnet" id="P02293"/>
<dbReference type="PaxDb" id="4932-YDR224C"/>
<dbReference type="PeptideAtlas" id="P02293"/>
<dbReference type="EnsemblFungi" id="YDR224C_mRNA">
    <property type="protein sequence ID" value="YDR224C"/>
    <property type="gene ID" value="YDR224C"/>
</dbReference>
<dbReference type="GeneID" id="851810"/>
<dbReference type="KEGG" id="sce:YDR224C"/>
<dbReference type="AGR" id="SGD:S000002632"/>
<dbReference type="SGD" id="S000002632">
    <property type="gene designation" value="HTB1"/>
</dbReference>
<dbReference type="VEuPathDB" id="FungiDB:YDR224C"/>
<dbReference type="eggNOG" id="KOG1744">
    <property type="taxonomic scope" value="Eukaryota"/>
</dbReference>
<dbReference type="GeneTree" id="ENSGT01130000278348"/>
<dbReference type="HOGENOM" id="CLU_075666_1_3_1"/>
<dbReference type="InParanoid" id="P02293"/>
<dbReference type="OMA" id="FCPFAIR"/>
<dbReference type="OrthoDB" id="10254238at2759"/>
<dbReference type="BioCyc" id="YEAST:G3O-29804-MONOMER"/>
<dbReference type="Reactome" id="R-SCE-2299718">
    <property type="pathway name" value="Condensation of Prophase Chromosomes"/>
</dbReference>
<dbReference type="Reactome" id="R-SCE-2559580">
    <property type="pathway name" value="Oxidative Stress Induced Senescence"/>
</dbReference>
<dbReference type="Reactome" id="R-SCE-3214815">
    <property type="pathway name" value="HDACs deacetylate histones"/>
</dbReference>
<dbReference type="Reactome" id="R-SCE-3214847">
    <property type="pathway name" value="HATs acetylate histones"/>
</dbReference>
<dbReference type="Reactome" id="R-SCE-427359">
    <property type="pathway name" value="SIRT1 negatively regulates rRNA expression"/>
</dbReference>
<dbReference type="Reactome" id="R-SCE-5625886">
    <property type="pathway name" value="Activated PKN1 stimulates transcription of AR (androgen receptor) regulated genes KLK2 and KLK3"/>
</dbReference>
<dbReference type="Reactome" id="R-SCE-5689880">
    <property type="pathway name" value="Ub-specific processing proteases"/>
</dbReference>
<dbReference type="Reactome" id="R-SCE-5693565">
    <property type="pathway name" value="Recruitment and ATM-mediated phosphorylation of repair and signaling proteins at DNA double strand breaks"/>
</dbReference>
<dbReference type="Reactome" id="R-SCE-68616">
    <property type="pathway name" value="Assembly of the ORC complex at the origin of replication"/>
</dbReference>
<dbReference type="Reactome" id="R-SCE-73772">
    <property type="pathway name" value="RNA Polymerase I Promoter Escape"/>
</dbReference>
<dbReference type="Reactome" id="R-SCE-9018519">
    <property type="pathway name" value="Estrogen-dependent gene expression"/>
</dbReference>
<dbReference type="BioGRID-ORCS" id="851810">
    <property type="hits" value="4 hits in 10 CRISPR screens"/>
</dbReference>
<dbReference type="EvolutionaryTrace" id="P02293"/>
<dbReference type="PRO" id="PR:P02293"/>
<dbReference type="Proteomes" id="UP000002311">
    <property type="component" value="Chromosome IV"/>
</dbReference>
<dbReference type="RNAct" id="P02293">
    <property type="molecule type" value="protein"/>
</dbReference>
<dbReference type="GO" id="GO:0000786">
    <property type="term" value="C:nucleosome"/>
    <property type="evidence" value="ECO:0000314"/>
    <property type="project" value="SGD"/>
</dbReference>
<dbReference type="GO" id="GO:0005634">
    <property type="term" value="C:nucleus"/>
    <property type="evidence" value="ECO:0000303"/>
    <property type="project" value="ComplexPortal"/>
</dbReference>
<dbReference type="GO" id="GO:0003677">
    <property type="term" value="F:DNA binding"/>
    <property type="evidence" value="ECO:0000314"/>
    <property type="project" value="SGD"/>
</dbReference>
<dbReference type="GO" id="GO:0046982">
    <property type="term" value="F:protein heterodimerization activity"/>
    <property type="evidence" value="ECO:0007669"/>
    <property type="project" value="InterPro"/>
</dbReference>
<dbReference type="GO" id="GO:0030527">
    <property type="term" value="F:structural constituent of chromatin"/>
    <property type="evidence" value="ECO:0007669"/>
    <property type="project" value="InterPro"/>
</dbReference>
<dbReference type="GO" id="GO:0006325">
    <property type="term" value="P:chromatin organization"/>
    <property type="evidence" value="ECO:0000314"/>
    <property type="project" value="SGD"/>
</dbReference>
<dbReference type="GO" id="GO:0000122">
    <property type="term" value="P:negative regulation of transcription by RNA polymerase II"/>
    <property type="evidence" value="ECO:0000315"/>
    <property type="project" value="SGD"/>
</dbReference>
<dbReference type="GO" id="GO:0006301">
    <property type="term" value="P:postreplication repair"/>
    <property type="evidence" value="ECO:0000316"/>
    <property type="project" value="SGD"/>
</dbReference>
<dbReference type="GO" id="GO:0006355">
    <property type="term" value="P:regulation of DNA-templated transcription"/>
    <property type="evidence" value="ECO:0000303"/>
    <property type="project" value="ComplexPortal"/>
</dbReference>
<dbReference type="CDD" id="cd22910">
    <property type="entry name" value="HFD_H2B"/>
    <property type="match status" value="1"/>
</dbReference>
<dbReference type="FunFam" id="1.10.20.10:FF:000014">
    <property type="entry name" value="Histone H2B"/>
    <property type="match status" value="1"/>
</dbReference>
<dbReference type="Gene3D" id="1.10.20.10">
    <property type="entry name" value="Histone, subunit A"/>
    <property type="match status" value="1"/>
</dbReference>
<dbReference type="IDEAL" id="IID50196"/>
<dbReference type="InterPro" id="IPR009072">
    <property type="entry name" value="Histone-fold"/>
</dbReference>
<dbReference type="InterPro" id="IPR007125">
    <property type="entry name" value="Histone_H2A/H2B/H3"/>
</dbReference>
<dbReference type="InterPro" id="IPR000558">
    <property type="entry name" value="Histone_H2B"/>
</dbReference>
<dbReference type="InterPro" id="IPR055333">
    <property type="entry name" value="HISTONE_H2B_site"/>
</dbReference>
<dbReference type="PANTHER" id="PTHR23428">
    <property type="entry name" value="HISTONE H2B"/>
    <property type="match status" value="1"/>
</dbReference>
<dbReference type="Pfam" id="PF00125">
    <property type="entry name" value="Histone"/>
    <property type="match status" value="1"/>
</dbReference>
<dbReference type="PRINTS" id="PR00621">
    <property type="entry name" value="HISTONEH2B"/>
</dbReference>
<dbReference type="SMART" id="SM00427">
    <property type="entry name" value="H2B"/>
    <property type="match status" value="1"/>
</dbReference>
<dbReference type="SUPFAM" id="SSF47113">
    <property type="entry name" value="Histone-fold"/>
    <property type="match status" value="1"/>
</dbReference>
<dbReference type="PROSITE" id="PS00357">
    <property type="entry name" value="HISTONE_H2B"/>
    <property type="match status" value="1"/>
</dbReference>
<proteinExistence type="evidence at protein level"/>
<feature type="initiator methionine" description="Removed" evidence="22">
    <location>
        <position position="1"/>
    </location>
</feature>
<feature type="chain" id="PRO_0000071938" description="Histone H2B.1">
    <location>
        <begin position="2"/>
        <end position="131"/>
    </location>
</feature>
<feature type="region of interest" description="Disordered" evidence="1">
    <location>
        <begin position="1"/>
        <end position="38"/>
    </location>
</feature>
<feature type="compositionally biased region" description="Basic and acidic residues" evidence="1">
    <location>
        <begin position="1"/>
        <end position="19"/>
    </location>
</feature>
<feature type="modified residue" description="N6-acetyllysine; alternate" evidence="19">
    <location>
        <position position="7"/>
    </location>
</feature>
<feature type="modified residue" description="N6-acetyllysine; alternate" evidence="19">
    <location>
        <position position="8"/>
    </location>
</feature>
<feature type="modified residue" description="Phosphoserine" evidence="16 17">
    <location>
        <position position="11"/>
    </location>
</feature>
<feature type="modified residue" description="N6-acetyllysine" evidence="4 12">
    <location>
        <position position="12"/>
    </location>
</feature>
<feature type="modified residue" description="N6-acetyllysine; alternate" evidence="4 12 19 20">
    <location>
        <position position="17"/>
    </location>
</feature>
<feature type="modified residue" description="N6-acetyllysine; alternate" evidence="20">
    <location>
        <position position="18"/>
    </location>
</feature>
<feature type="modified residue" description="N6-acetyllysine; alternate" evidence="20">
    <location>
        <position position="22"/>
    </location>
</feature>
<feature type="modified residue" description="N6-butyryllysine; alternate" evidence="20">
    <location>
        <position position="22"/>
    </location>
</feature>
<feature type="modified residue" description="N6-acetyllysine; alternate" evidence="20">
    <location>
        <position position="23"/>
    </location>
</feature>
<feature type="modified residue" description="N6-methyllysine; alternate" evidence="20">
    <location>
        <position position="23"/>
    </location>
</feature>
<feature type="modified residue" description="N6-succinyllysine" evidence="21">
    <location>
        <position position="35"/>
    </location>
</feature>
<feature type="modified residue" description="N6,N6-dimethyllysine" evidence="20">
    <location>
        <position position="38"/>
    </location>
</feature>
<feature type="modified residue" description="N6-succinyllysine" evidence="21">
    <location>
        <position position="47"/>
    </location>
</feature>
<feature type="cross-link" description="Glycyl lysine isopeptide (Lys-Gly) (interchain with G-Cter in SUMO); alternate">
    <location>
        <position position="7"/>
    </location>
</feature>
<feature type="cross-link" description="Glycyl lysine isopeptide (Lys-Gly) (interchain with G-Cter in SUMO); alternate">
    <location>
        <position position="8"/>
    </location>
</feature>
<feature type="cross-link" description="Glycyl lysine isopeptide (Lys-Gly) (interchain with G-Cter in SUMO); alternate" evidence="22">
    <location>
        <position position="17"/>
    </location>
</feature>
<feature type="cross-link" description="Glycyl lysine isopeptide (Lys-Gly) (interchain with G-Cter in SUMO); alternate" evidence="22">
    <location>
        <position position="18"/>
    </location>
</feature>
<feature type="cross-link" description="Glycyl lysine isopeptide (Lys-Gly) (interchain with G-Cter in ubiquitin)" evidence="2 7 8 9 13 18">
    <location>
        <position position="124"/>
    </location>
</feature>
<feature type="mutagenesis site" description="Reduces sumoylation." evidence="19">
    <original>KK</original>
    <variation>AA</variation>
    <location>
        <begin position="7"/>
        <end position="8"/>
    </location>
</feature>
<feature type="mutagenesis site" description="Desensitizes cells to H(2)O(2) treatment." evidence="16">
    <original>S</original>
    <variation>A</variation>
    <location>
        <position position="11"/>
    </location>
</feature>
<feature type="mutagenesis site" description="Induces apoptotic-like features including chromatin condensation." evidence="16">
    <original>S</original>
    <variation>E</variation>
    <location>
        <position position="11"/>
    </location>
</feature>
<feature type="mutagenesis site" description="Reduces sumoylation." evidence="19">
    <original>KK</original>
    <variation>AA</variation>
    <location>
        <begin position="17"/>
        <end position="18"/>
    </location>
</feature>
<feature type="mutagenesis site" description="Confers UV-radiation sensitivity; when associated with F-87 and S-88." evidence="5">
    <original>V</original>
    <variation>F</variation>
    <location>
        <position position="48"/>
    </location>
</feature>
<feature type="mutagenesis site" description="Confers UV-radiation sensitivity; when associated with F-48 and S-88." evidence="5">
    <original>Y</original>
    <variation>F</variation>
    <location>
        <position position="87"/>
    </location>
</feature>
<feature type="mutagenesis site" description="Confers UV-radiation sensitivity; when associated with F-48 and F-87." evidence="5">
    <original>N</original>
    <variation>S</variation>
    <location>
        <position position="88"/>
    </location>
</feature>
<feature type="mutagenesis site" description="Impairs ubiquitin conjugation, DNA double-strand brakes formation during meiosis and histone H3-K79 methylation." evidence="2 6 9 13 15">
    <original>K</original>
    <variation>R</variation>
    <location>
        <position position="124"/>
    </location>
</feature>
<feature type="helix" evidence="23">
    <location>
        <begin position="42"/>
        <end position="52"/>
    </location>
</feature>
<feature type="strand" evidence="23">
    <location>
        <begin position="57"/>
        <end position="59"/>
    </location>
</feature>
<feature type="helix" evidence="23">
    <location>
        <begin position="60"/>
        <end position="87"/>
    </location>
</feature>
<feature type="strand" evidence="23">
    <location>
        <begin position="91"/>
        <end position="93"/>
    </location>
</feature>
<feature type="helix" evidence="23">
    <location>
        <begin position="95"/>
        <end position="105"/>
    </location>
</feature>
<feature type="helix" evidence="23">
    <location>
        <begin position="108"/>
        <end position="126"/>
    </location>
</feature>
<keyword id="KW-0002">3D-structure</keyword>
<keyword id="KW-0007">Acetylation</keyword>
<keyword id="KW-0158">Chromosome</keyword>
<keyword id="KW-0903">Direct protein sequencing</keyword>
<keyword id="KW-0238">DNA-binding</keyword>
<keyword id="KW-1017">Isopeptide bond</keyword>
<keyword id="KW-0488">Methylation</keyword>
<keyword id="KW-0544">Nucleosome core</keyword>
<keyword id="KW-0539">Nucleus</keyword>
<keyword id="KW-0597">Phosphoprotein</keyword>
<keyword id="KW-1185">Reference proteome</keyword>
<keyword id="KW-0832">Ubl conjugation</keyword>
<name>H2B1_YEAST</name>
<comment type="function">
    <text evidence="5 6 10 13 14 15 16 17 19">Core component of nucleosome. Nucleosomes wrap and compact DNA into chromatin, limiting DNA accessibility to the cellular machineries which require DNA as a template. Histones thereby play a central role in transcription regulation, DNA repair, DNA replication and chromosomal stability. DNA accessibility is regulated via a complex set of post-translational modifications of histones, also called histone code, and nucleosome remodeling.</text>
</comment>
<comment type="subunit">
    <text>The nucleosome is a histone octamer containing two molecules each of H2A, H2B, H3 and H4 assembled in one H3-H4 heterotetramer and two H2A-H2B heterodimers. The octamer wraps approximately 147 bp of DNA.</text>
</comment>
<comment type="interaction">
    <interactant intactId="EBI-8088">
        <id>P02293</id>
    </interactant>
    <interactant intactId="EBI-18410">
        <id>P32597</id>
        <label>STH1</label>
    </interactant>
    <organismsDiffer>false</organismsDiffer>
    <experiments>4</experiments>
</comment>
<comment type="subcellular location">
    <subcellularLocation>
        <location>Nucleus</location>
    </subcellularLocation>
    <subcellularLocation>
        <location>Chromosome</location>
    </subcellularLocation>
</comment>
<comment type="PTM">
    <text>Monoubiquitinated by the RAD6/UBC2-BRE1 complex to form H2BK123ub1. H2BK123ub1 gives a specific tag for epigenetic transcriptional activation and is also prerequisite for H3K4me and H3K79me formation. H2BK123ub1 also modulates the formation of double-strand breaks during meiosis and is a prerequisite for DNA-damage checkpoint activation. Deubiquitination is performed by UBP8 in presence of SGF11.</text>
</comment>
<comment type="PTM">
    <text evidence="16 17">Phosphorylated by STE20 to form H2BS10ph during progression through meiotic prophase. May be correlated with chromosome condensation. H2BS10ph is also formed after H(2)O(2) treatment, and is a step leading to apoptosis.</text>
</comment>
<comment type="PTM">
    <text evidence="3 4 12 19">Acetylated by GCN5, a component of the SAGA complex, to form H2BK11ac and H2BK16ac. H2BK16ac can also be formed by ESA1, a component of the NuA4 histone acetyltransferase (HAT) complex. Acetylation of N-terminal lysines and particularly formation of H2BK11acK16ac has a positive effect on transcription.</text>
</comment>
<comment type="PTM">
    <text evidence="11 19">Sumoylation to form H2BK6su or H2BK7su, and probably also H2BK16su or H2BK17su, occurs preferentially near the telomeres and represses gene transcription.</text>
</comment>
<comment type="similarity">
    <text evidence="22">Belongs to the histone H2B family.</text>
</comment>
<comment type="caution">
    <text evidence="22">To ensure consistency between histone entries, we follow the 'Brno' nomenclature for histone modifications, with positions referring to those used in the literature for the 'closest' model organism. Due to slight variations in histone sequences between organisms and to the presence of initiator methionine in UniProtKB/Swiss-Prot sequences, the actual positions of modified amino acids in the sequence generally differ. In this entry the following conventions are used: H2BK6ac = acetylated Lys-7; H2BK6su = sumoylated Lys-7; H2BK7ac = acetylated Lys-8; H2BK7su = sumoylated Lys-8; H2BS10ph = phosphorylated Ser-11; H2BK11ac = acetylated Lys-12; H2BK16ac = acetylated Lys-17; H2BK16su = sumoylated Lys-17; H2BK17su = sumoylated Lys-18; H2BK123ub1 = monoubiquitinated Lys-124.</text>
</comment>
<protein>
    <recommendedName>
        <fullName>Histone H2B.1</fullName>
    </recommendedName>
    <alternativeName>
        <fullName>Suppressor of Ty protein 12</fullName>
    </alternativeName>
</protein>
<sequence length="131" mass="14252">MSAKAEKKPASKAPAEKKPAAKKTSTSTDGKKRSKARKETYSSYIYKVLKQTHPDTGISQKSMSILNSFVNDIFERIATEASKLAAYNKKSTISAREIQTAVRLILPGELAKHAVSEGTRAVTKYSSSTQA</sequence>
<evidence type="ECO:0000256" key="1">
    <source>
        <dbReference type="SAM" id="MobiDB-lite"/>
    </source>
</evidence>
<evidence type="ECO:0000269" key="2">
    <source>
    </source>
</evidence>
<evidence type="ECO:0000269" key="3">
    <source>
    </source>
</evidence>
<evidence type="ECO:0000269" key="4">
    <source>
    </source>
</evidence>
<evidence type="ECO:0000269" key="5">
    <source>
    </source>
</evidence>
<evidence type="ECO:0000269" key="6">
    <source>
    </source>
</evidence>
<evidence type="ECO:0000269" key="7">
    <source>
    </source>
</evidence>
<evidence type="ECO:0000269" key="8">
    <source>
    </source>
</evidence>
<evidence type="ECO:0000269" key="9">
    <source>
    </source>
</evidence>
<evidence type="ECO:0000269" key="10">
    <source>
    </source>
</evidence>
<evidence type="ECO:0000269" key="11">
    <source>
    </source>
</evidence>
<evidence type="ECO:0000269" key="12">
    <source>
    </source>
</evidence>
<evidence type="ECO:0000269" key="13">
    <source>
    </source>
</evidence>
<evidence type="ECO:0000269" key="14">
    <source>
    </source>
</evidence>
<evidence type="ECO:0000269" key="15">
    <source>
    </source>
</evidence>
<evidence type="ECO:0000269" key="16">
    <source>
    </source>
</evidence>
<evidence type="ECO:0000269" key="17">
    <source>
    </source>
</evidence>
<evidence type="ECO:0000269" key="18">
    <source>
    </source>
</evidence>
<evidence type="ECO:0000269" key="19">
    <source>
    </source>
</evidence>
<evidence type="ECO:0000269" key="20">
    <source>
    </source>
</evidence>
<evidence type="ECO:0000269" key="21">
    <source>
    </source>
</evidence>
<evidence type="ECO:0000305" key="22"/>
<evidence type="ECO:0007829" key="23">
    <source>
        <dbReference type="PDB" id="6AE8"/>
    </source>
</evidence>